<keyword id="KW-0067">ATP-binding</keyword>
<keyword id="KW-0418">Kinase</keyword>
<keyword id="KW-0545">Nucleotide biosynthesis</keyword>
<keyword id="KW-0547">Nucleotide-binding</keyword>
<keyword id="KW-0808">Transferase</keyword>
<name>KTHY_SALHS</name>
<feature type="chain" id="PRO_1000097426" description="Thymidylate kinase">
    <location>
        <begin position="1"/>
        <end position="213"/>
    </location>
</feature>
<feature type="binding site" evidence="1">
    <location>
        <begin position="10"/>
        <end position="17"/>
    </location>
    <ligand>
        <name>ATP</name>
        <dbReference type="ChEBI" id="CHEBI:30616"/>
    </ligand>
</feature>
<reference key="1">
    <citation type="journal article" date="2011" name="J. Bacteriol.">
        <title>Comparative genomics of 28 Salmonella enterica isolates: evidence for CRISPR-mediated adaptive sublineage evolution.</title>
        <authorList>
            <person name="Fricke W.F."/>
            <person name="Mammel M.K."/>
            <person name="McDermott P.F."/>
            <person name="Tartera C."/>
            <person name="White D.G."/>
            <person name="Leclerc J.E."/>
            <person name="Ravel J."/>
            <person name="Cebula T.A."/>
        </authorList>
    </citation>
    <scope>NUCLEOTIDE SEQUENCE [LARGE SCALE GENOMIC DNA]</scope>
    <source>
        <strain>SL476</strain>
    </source>
</reference>
<comment type="function">
    <text evidence="1">Phosphorylation of dTMP to form dTDP in both de novo and salvage pathways of dTTP synthesis.</text>
</comment>
<comment type="catalytic activity">
    <reaction evidence="1">
        <text>dTMP + ATP = dTDP + ADP</text>
        <dbReference type="Rhea" id="RHEA:13517"/>
        <dbReference type="ChEBI" id="CHEBI:30616"/>
        <dbReference type="ChEBI" id="CHEBI:58369"/>
        <dbReference type="ChEBI" id="CHEBI:63528"/>
        <dbReference type="ChEBI" id="CHEBI:456216"/>
        <dbReference type="EC" id="2.7.4.9"/>
    </reaction>
</comment>
<comment type="similarity">
    <text evidence="1">Belongs to the thymidylate kinase family.</text>
</comment>
<proteinExistence type="inferred from homology"/>
<gene>
    <name evidence="1" type="primary">tmk</name>
    <name type="ordered locus">SeHA_C1314</name>
</gene>
<sequence length="213" mass="23738">MGSNYIVIEGLEGAGKTTARDVVVETLEQLGIRNMIFTREPGGTQLAEKLRSLVLDIRSVGDEVITDKAEVLMFYAARVQLVETVIKPALAQGIWVIGDRHDLSTQAYQGGGRGIDQTMLATLRDAVLGDFRPDLTLYLDVTPEVGLKRARARGDLDRIEQESFDFFNRTRARYLELAAQDSRIRTIDATQPLDAVMRDIRATVTKWVQEQAA</sequence>
<accession>B4TFH5</accession>
<protein>
    <recommendedName>
        <fullName evidence="1">Thymidylate kinase</fullName>
        <ecNumber evidence="1">2.7.4.9</ecNumber>
    </recommendedName>
    <alternativeName>
        <fullName evidence="1">dTMP kinase</fullName>
    </alternativeName>
</protein>
<evidence type="ECO:0000255" key="1">
    <source>
        <dbReference type="HAMAP-Rule" id="MF_00165"/>
    </source>
</evidence>
<dbReference type="EC" id="2.7.4.9" evidence="1"/>
<dbReference type="EMBL" id="CP001120">
    <property type="protein sequence ID" value="ACF69179.1"/>
    <property type="molecule type" value="Genomic_DNA"/>
</dbReference>
<dbReference type="RefSeq" id="WP_000535396.1">
    <property type="nucleotide sequence ID" value="NC_011083.1"/>
</dbReference>
<dbReference type="SMR" id="B4TFH5"/>
<dbReference type="KEGG" id="seh:SeHA_C1314"/>
<dbReference type="HOGENOM" id="CLU_049131_0_1_6"/>
<dbReference type="Proteomes" id="UP000001866">
    <property type="component" value="Chromosome"/>
</dbReference>
<dbReference type="GO" id="GO:0005829">
    <property type="term" value="C:cytosol"/>
    <property type="evidence" value="ECO:0007669"/>
    <property type="project" value="TreeGrafter"/>
</dbReference>
<dbReference type="GO" id="GO:0005524">
    <property type="term" value="F:ATP binding"/>
    <property type="evidence" value="ECO:0007669"/>
    <property type="project" value="UniProtKB-UniRule"/>
</dbReference>
<dbReference type="GO" id="GO:0004798">
    <property type="term" value="F:dTMP kinase activity"/>
    <property type="evidence" value="ECO:0007669"/>
    <property type="project" value="UniProtKB-UniRule"/>
</dbReference>
<dbReference type="GO" id="GO:0006233">
    <property type="term" value="P:dTDP biosynthetic process"/>
    <property type="evidence" value="ECO:0007669"/>
    <property type="project" value="InterPro"/>
</dbReference>
<dbReference type="GO" id="GO:0006235">
    <property type="term" value="P:dTTP biosynthetic process"/>
    <property type="evidence" value="ECO:0007669"/>
    <property type="project" value="UniProtKB-UniRule"/>
</dbReference>
<dbReference type="GO" id="GO:0006227">
    <property type="term" value="P:dUDP biosynthetic process"/>
    <property type="evidence" value="ECO:0007669"/>
    <property type="project" value="TreeGrafter"/>
</dbReference>
<dbReference type="CDD" id="cd01672">
    <property type="entry name" value="TMPK"/>
    <property type="match status" value="1"/>
</dbReference>
<dbReference type="FunFam" id="3.40.50.300:FF:000321">
    <property type="entry name" value="Thymidylate kinase"/>
    <property type="match status" value="1"/>
</dbReference>
<dbReference type="Gene3D" id="3.40.50.300">
    <property type="entry name" value="P-loop containing nucleotide triphosphate hydrolases"/>
    <property type="match status" value="1"/>
</dbReference>
<dbReference type="HAMAP" id="MF_00165">
    <property type="entry name" value="Thymidylate_kinase"/>
    <property type="match status" value="1"/>
</dbReference>
<dbReference type="InterPro" id="IPR027417">
    <property type="entry name" value="P-loop_NTPase"/>
</dbReference>
<dbReference type="InterPro" id="IPR039430">
    <property type="entry name" value="Thymidylate_kin-like_dom"/>
</dbReference>
<dbReference type="InterPro" id="IPR018095">
    <property type="entry name" value="Thymidylate_kin_CS"/>
</dbReference>
<dbReference type="InterPro" id="IPR018094">
    <property type="entry name" value="Thymidylate_kinase"/>
</dbReference>
<dbReference type="NCBIfam" id="TIGR00041">
    <property type="entry name" value="DTMP_kinase"/>
    <property type="match status" value="1"/>
</dbReference>
<dbReference type="PANTHER" id="PTHR10344">
    <property type="entry name" value="THYMIDYLATE KINASE"/>
    <property type="match status" value="1"/>
</dbReference>
<dbReference type="PANTHER" id="PTHR10344:SF4">
    <property type="entry name" value="UMP-CMP KINASE 2, MITOCHONDRIAL"/>
    <property type="match status" value="1"/>
</dbReference>
<dbReference type="Pfam" id="PF02223">
    <property type="entry name" value="Thymidylate_kin"/>
    <property type="match status" value="1"/>
</dbReference>
<dbReference type="SUPFAM" id="SSF52540">
    <property type="entry name" value="P-loop containing nucleoside triphosphate hydrolases"/>
    <property type="match status" value="1"/>
</dbReference>
<dbReference type="PROSITE" id="PS01331">
    <property type="entry name" value="THYMIDYLATE_KINASE"/>
    <property type="match status" value="1"/>
</dbReference>
<organism>
    <name type="scientific">Salmonella heidelberg (strain SL476)</name>
    <dbReference type="NCBI Taxonomy" id="454169"/>
    <lineage>
        <taxon>Bacteria</taxon>
        <taxon>Pseudomonadati</taxon>
        <taxon>Pseudomonadota</taxon>
        <taxon>Gammaproteobacteria</taxon>
        <taxon>Enterobacterales</taxon>
        <taxon>Enterobacteriaceae</taxon>
        <taxon>Salmonella</taxon>
    </lineage>
</organism>